<gene>
    <name evidence="16" type="primary">ENA1</name>
    <name type="synonym">HOR6</name>
    <name evidence="12" type="synonym">PMR2</name>
    <name type="synonym">PMR2A</name>
    <name evidence="16" type="ordered locus">YDR040C</name>
    <name type="ORF">YD6888.02C</name>
</gene>
<evidence type="ECO:0000250" key="1">
    <source>
        <dbReference type="UniProtKB" id="P04191"/>
    </source>
</evidence>
<evidence type="ECO:0000255" key="2"/>
<evidence type="ECO:0000256" key="3">
    <source>
        <dbReference type="SAM" id="MobiDB-lite"/>
    </source>
</evidence>
<evidence type="ECO:0000269" key="4">
    <source>
    </source>
</evidence>
<evidence type="ECO:0000269" key="5">
    <source>
    </source>
</evidence>
<evidence type="ECO:0000269" key="6">
    <source>
    </source>
</evidence>
<evidence type="ECO:0000269" key="7">
    <source>
    </source>
</evidence>
<evidence type="ECO:0000269" key="8">
    <source>
    </source>
</evidence>
<evidence type="ECO:0000269" key="9">
    <source>
    </source>
</evidence>
<evidence type="ECO:0000269" key="10">
    <source>
    </source>
</evidence>
<evidence type="ECO:0000269" key="11">
    <source>
    </source>
</evidence>
<evidence type="ECO:0000303" key="12">
    <source>
    </source>
</evidence>
<evidence type="ECO:0000305" key="13"/>
<evidence type="ECO:0000305" key="14">
    <source>
    </source>
</evidence>
<evidence type="ECO:0000305" key="15">
    <source>
    </source>
</evidence>
<evidence type="ECO:0000312" key="16">
    <source>
        <dbReference type="SGD" id="S000002447"/>
    </source>
</evidence>
<reference key="1">
    <citation type="journal article" date="1989" name="Cell">
        <title>The yeast secretory pathway is perturbed by mutations in PMR1, a member of a Ca2+ ATPase family.</title>
        <authorList>
            <person name="Rudolph H.K."/>
            <person name="Antebi A."/>
            <person name="Fink G.R."/>
            <person name="Buckley C.M."/>
            <person name="Dorman T.E."/>
            <person name="Levitre J."/>
            <person name="Davidow L.S."/>
            <person name="Mao J.-I."/>
            <person name="Moir D.T."/>
        </authorList>
    </citation>
    <scope>NUCLEOTIDE SEQUENCE [GENOMIC DNA]</scope>
</reference>
<reference key="2">
    <citation type="journal article" date="1995" name="EMBO J.">
        <title>The PMR2 gene cluster encodes functionally distinct isoforms of a putative Na+ pump in the yeast plasma membrane.</title>
        <authorList>
            <person name="Wieland J."/>
            <person name="Nitsche A.M."/>
            <person name="Strayle J."/>
            <person name="Steiner H."/>
            <person name="Rudolph H.K."/>
        </authorList>
    </citation>
    <scope>NUCLEOTIDE SEQUENCE [GENOMIC DNA]</scope>
    <scope>FUNCTION</scope>
    <scope>SUBCELLULAR LOCATION</scope>
    <scope>INDUCTION</scope>
</reference>
<reference key="3">
    <citation type="journal article" date="1997" name="Nature">
        <title>The nucleotide sequence of Saccharomyces cerevisiae chromosome IV.</title>
        <authorList>
            <person name="Jacq C."/>
            <person name="Alt-Moerbe J."/>
            <person name="Andre B."/>
            <person name="Arnold W."/>
            <person name="Bahr A."/>
            <person name="Ballesta J.P.G."/>
            <person name="Bargues M."/>
            <person name="Baron L."/>
            <person name="Becker A."/>
            <person name="Biteau N."/>
            <person name="Bloecker H."/>
            <person name="Blugeon C."/>
            <person name="Boskovic J."/>
            <person name="Brandt P."/>
            <person name="Brueckner M."/>
            <person name="Buitrago M.J."/>
            <person name="Coster F."/>
            <person name="Delaveau T."/>
            <person name="del Rey F."/>
            <person name="Dujon B."/>
            <person name="Eide L.G."/>
            <person name="Garcia-Cantalejo J.M."/>
            <person name="Goffeau A."/>
            <person name="Gomez-Peris A."/>
            <person name="Granotier C."/>
            <person name="Hanemann V."/>
            <person name="Hankeln T."/>
            <person name="Hoheisel J.D."/>
            <person name="Jaeger W."/>
            <person name="Jimenez A."/>
            <person name="Jonniaux J.-L."/>
            <person name="Kraemer C."/>
            <person name="Kuester H."/>
            <person name="Laamanen P."/>
            <person name="Legros Y."/>
            <person name="Louis E.J."/>
            <person name="Moeller-Rieker S."/>
            <person name="Monnet A."/>
            <person name="Moro M."/>
            <person name="Mueller-Auer S."/>
            <person name="Nussbaumer B."/>
            <person name="Paricio N."/>
            <person name="Paulin L."/>
            <person name="Perea J."/>
            <person name="Perez-Alonso M."/>
            <person name="Perez-Ortin J.E."/>
            <person name="Pohl T.M."/>
            <person name="Prydz H."/>
            <person name="Purnelle B."/>
            <person name="Rasmussen S.W."/>
            <person name="Remacha M.A."/>
            <person name="Revuelta J.L."/>
            <person name="Rieger M."/>
            <person name="Salom D."/>
            <person name="Saluz H.P."/>
            <person name="Saiz J.E."/>
            <person name="Saren A.-M."/>
            <person name="Schaefer M."/>
            <person name="Scharfe M."/>
            <person name="Schmidt E.R."/>
            <person name="Schneider C."/>
            <person name="Scholler P."/>
            <person name="Schwarz S."/>
            <person name="Soler-Mira A."/>
            <person name="Urrestarazu L.A."/>
            <person name="Verhasselt P."/>
            <person name="Vissers S."/>
            <person name="Voet M."/>
            <person name="Volckaert G."/>
            <person name="Wagner G."/>
            <person name="Wambutt R."/>
            <person name="Wedler E."/>
            <person name="Wedler H."/>
            <person name="Woelfl S."/>
            <person name="Harris D.E."/>
            <person name="Bowman S."/>
            <person name="Brown D."/>
            <person name="Churcher C.M."/>
            <person name="Connor R."/>
            <person name="Dedman K."/>
            <person name="Gentles S."/>
            <person name="Hamlin N."/>
            <person name="Hunt S."/>
            <person name="Jones L."/>
            <person name="McDonald S."/>
            <person name="Murphy L.D."/>
            <person name="Niblett D."/>
            <person name="Odell C."/>
            <person name="Oliver K."/>
            <person name="Rajandream M.A."/>
            <person name="Richards C."/>
            <person name="Shore L."/>
            <person name="Walsh S.V."/>
            <person name="Barrell B.G."/>
            <person name="Dietrich F.S."/>
            <person name="Mulligan J.T."/>
            <person name="Allen E."/>
            <person name="Araujo R."/>
            <person name="Aviles E."/>
            <person name="Berno A."/>
            <person name="Carpenter J."/>
            <person name="Chen E."/>
            <person name="Cherry J.M."/>
            <person name="Chung E."/>
            <person name="Duncan M."/>
            <person name="Hunicke-Smith S."/>
            <person name="Hyman R.W."/>
            <person name="Komp C."/>
            <person name="Lashkari D."/>
            <person name="Lew H."/>
            <person name="Lin D."/>
            <person name="Mosedale D."/>
            <person name="Nakahara K."/>
            <person name="Namath A."/>
            <person name="Oefner P."/>
            <person name="Oh C."/>
            <person name="Petel F.X."/>
            <person name="Roberts D."/>
            <person name="Schramm S."/>
            <person name="Schroeder M."/>
            <person name="Shogren T."/>
            <person name="Shroff N."/>
            <person name="Winant A."/>
            <person name="Yelton M.A."/>
            <person name="Botstein D."/>
            <person name="Davis R.W."/>
            <person name="Johnston M."/>
            <person name="Andrews S."/>
            <person name="Brinkman R."/>
            <person name="Cooper J."/>
            <person name="Ding H."/>
            <person name="Du Z."/>
            <person name="Favello A."/>
            <person name="Fulton L."/>
            <person name="Gattung S."/>
            <person name="Greco T."/>
            <person name="Hallsworth K."/>
            <person name="Hawkins J."/>
            <person name="Hillier L.W."/>
            <person name="Jier M."/>
            <person name="Johnson D."/>
            <person name="Johnston L."/>
            <person name="Kirsten J."/>
            <person name="Kucaba T."/>
            <person name="Langston Y."/>
            <person name="Latreille P."/>
            <person name="Le T."/>
            <person name="Mardis E."/>
            <person name="Menezes S."/>
            <person name="Miller N."/>
            <person name="Nhan M."/>
            <person name="Pauley A."/>
            <person name="Peluso D."/>
            <person name="Rifkin L."/>
            <person name="Riles L."/>
            <person name="Taich A."/>
            <person name="Trevaskis E."/>
            <person name="Vignati D."/>
            <person name="Wilcox L."/>
            <person name="Wohldman P."/>
            <person name="Vaudin M."/>
            <person name="Wilson R."/>
            <person name="Waterston R."/>
            <person name="Albermann K."/>
            <person name="Hani J."/>
            <person name="Heumann K."/>
            <person name="Kleine K."/>
            <person name="Mewes H.-W."/>
            <person name="Zollner A."/>
            <person name="Zaccaria P."/>
        </authorList>
    </citation>
    <scope>NUCLEOTIDE SEQUENCE [LARGE SCALE GENOMIC DNA]</scope>
    <source>
        <strain>ATCC 204508 / S288c</strain>
    </source>
</reference>
<reference key="4">
    <citation type="journal article" date="2014" name="G3 (Bethesda)">
        <title>The reference genome sequence of Saccharomyces cerevisiae: Then and now.</title>
        <authorList>
            <person name="Engel S.R."/>
            <person name="Dietrich F.S."/>
            <person name="Fisk D.G."/>
            <person name="Binkley G."/>
            <person name="Balakrishnan R."/>
            <person name="Costanzo M.C."/>
            <person name="Dwight S.S."/>
            <person name="Hitz B.C."/>
            <person name="Karra K."/>
            <person name="Nash R.S."/>
            <person name="Weng S."/>
            <person name="Wong E.D."/>
            <person name="Lloyd P."/>
            <person name="Skrzypek M.S."/>
            <person name="Miyasato S.R."/>
            <person name="Simison M."/>
            <person name="Cherry J.M."/>
        </authorList>
    </citation>
    <scope>GENOME REANNOTATION</scope>
    <source>
        <strain>ATCC 204508 / S288c</strain>
    </source>
</reference>
<reference key="5">
    <citation type="journal article" date="1991" name="Mol. Gen. Genet.">
        <title>A PMR2 tandem repeat with a modified C-terminus is located downstream from the KRS1 gene encoding lysyl-tRNA synthetase in Saccharomyces cerevisiae.</title>
        <authorList>
            <person name="Martinez R."/>
            <person name="Latreille M.-T."/>
            <person name="Mirande M."/>
        </authorList>
    </citation>
    <scope>NUCLEOTIDE SEQUENCE [GENOMIC DNA] OF 534-1091</scope>
    <source>
        <strain>7305B</strain>
    </source>
</reference>
<reference key="6">
    <citation type="journal article" date="1988" name="J. Biol. Chem.">
        <title>The yeast lysyl-tRNA synthetase gene. Evidence for general amino acid control of its expression and domain structure of the encoded protein.</title>
        <authorList>
            <person name="Mirande M."/>
            <person name="Waller J.-P."/>
        </authorList>
    </citation>
    <scope>PRELIMINARY NUCLEOTIDE SEQUENCE [GENOMIC DNA] OF 534-1091</scope>
    <source>
        <strain>ATCC 26109 / X2180</strain>
    </source>
</reference>
<reference key="7">
    <citation type="journal article" date="1996" name="FEBS Lett.">
        <title>Multiple transduction pathways regulate the sodium-extrusion gene PMR2/ENA1 during salt stress in yeast.</title>
        <authorList>
            <person name="Marquez J.A."/>
            <person name="Serrano R."/>
        </authorList>
    </citation>
    <scope>INDUCTION</scope>
</reference>
<reference key="8">
    <citation type="journal article" date="1997" name="Biochim. Biophys. Acta">
        <title>Overexpression of the sodium ATPase of Saccharomyces cerevisiae: conditions for phosphorylation from ATP and Pi.</title>
        <authorList>
            <person name="Benito B."/>
            <person name="Quintero F.J."/>
            <person name="Rodriguez-Navarro A."/>
        </authorList>
    </citation>
    <scope>FUNCTION</scope>
    <scope>CATALYTIC ACTIVITY</scope>
    <scope>SUBCELLULAR LOCATION</scope>
    <scope>PHOSPHORYLATION</scope>
</reference>
<reference key="9">
    <citation type="journal article" date="2003" name="Nature">
        <title>Global analysis of protein localization in budding yeast.</title>
        <authorList>
            <person name="Huh W.-K."/>
            <person name="Falvo J.V."/>
            <person name="Gerke L.C."/>
            <person name="Carroll A.S."/>
            <person name="Howson R.W."/>
            <person name="Weissman J.S."/>
            <person name="O'Shea E.K."/>
        </authorList>
    </citation>
    <scope>SUBCELLULAR LOCATION [LARGE SCALE ANALYSIS]</scope>
</reference>
<reference key="10">
    <citation type="journal article" date="2003" name="Plant J.">
        <title>Molecular cloning and characterization of a sodium-pump ATPase of the moss Physcomitrella patens.</title>
        <authorList>
            <person name="Benito B."/>
            <person name="Rodriguez-Navarro A."/>
        </authorList>
    </citation>
    <scope>FUNCTION</scope>
    <scope>CATALYTIC ACTIVITY</scope>
</reference>
<reference key="11">
    <citation type="journal article" date="2003" name="Nature">
        <title>Global analysis of protein expression in yeast.</title>
        <authorList>
            <person name="Ghaemmaghami S."/>
            <person name="Huh W.-K."/>
            <person name="Bower K."/>
            <person name="Howson R.W."/>
            <person name="Belle A."/>
            <person name="Dephoure N."/>
            <person name="O'Shea E.K."/>
            <person name="Weissman J.S."/>
        </authorList>
    </citation>
    <scope>LEVEL OF PROTEIN EXPRESSION [LARGE SCALE ANALYSIS]</scope>
</reference>
<reference key="12">
    <citation type="journal article" date="2006" name="Proc. Natl. Acad. Sci. U.S.A.">
        <title>A global topology map of the Saccharomyces cerevisiae membrane proteome.</title>
        <authorList>
            <person name="Kim H."/>
            <person name="Melen K."/>
            <person name="Oesterberg M."/>
            <person name="von Heijne G."/>
        </authorList>
    </citation>
    <scope>TOPOLOGY [LARGE SCALE ANALYSIS]</scope>
    <source>
        <strain>ATCC 208353 / W303-1A</strain>
    </source>
</reference>
<reference key="13">
    <citation type="journal article" date="2009" name="Nat. Chem. Biol.">
        <title>Moonlighting proteins Hal3 and Vhs3 form a heteromeric PPCDC with Ykl088w in yeast CoA biosynthesis.</title>
        <authorList>
            <person name="Ruiz A."/>
            <person name="Gonzalez A."/>
            <person name="Munoz I."/>
            <person name="Serrano R."/>
            <person name="Abrie J.A."/>
            <person name="Strauss E."/>
            <person name="Arino J."/>
        </authorList>
    </citation>
    <scope>FUNCTION</scope>
</reference>
<reference key="14">
    <citation type="journal article" date="2012" name="FEMS Yeast Res.">
        <title>Plasma-membrane hyperpolarization diminishes the cation efflux via Nha1 antiporter and Ena ATPase under potassium-limiting conditions.</title>
        <authorList>
            <person name="Zahradka J."/>
            <person name="Sychrova H."/>
        </authorList>
    </citation>
    <scope>FUNCTION</scope>
</reference>
<dbReference type="EC" id="7.2.2.3" evidence="15"/>
<dbReference type="EMBL" id="U24069">
    <property type="protein sequence ID" value="AAA65600.1"/>
    <property type="molecule type" value="Genomic_DNA"/>
</dbReference>
<dbReference type="EMBL" id="Z54075">
    <property type="protein sequence ID" value="CAA90779.1"/>
    <property type="molecule type" value="Genomic_DNA"/>
</dbReference>
<dbReference type="EMBL" id="Z74336">
    <property type="protein sequence ID" value="CAA98867.1"/>
    <property type="molecule type" value="Genomic_DNA"/>
</dbReference>
<dbReference type="EMBL" id="X58626">
    <property type="protein sequence ID" value="CAA41479.1"/>
    <property type="molecule type" value="Genomic_DNA"/>
</dbReference>
<dbReference type="EMBL" id="J04186">
    <property type="status" value="NOT_ANNOTATED_CDS"/>
    <property type="molecule type" value="Genomic_DNA"/>
</dbReference>
<dbReference type="EMBL" id="BK006938">
    <property type="protein sequence ID" value="DAA11888.1"/>
    <property type="molecule type" value="Genomic_DNA"/>
</dbReference>
<dbReference type="PIR" id="S05788">
    <property type="entry name" value="PWBYR2"/>
</dbReference>
<dbReference type="RefSeq" id="NP_010325.1">
    <property type="nucleotide sequence ID" value="NM_001180348.1"/>
</dbReference>
<dbReference type="SMR" id="P13587"/>
<dbReference type="BioGRID" id="32095">
    <property type="interactions" value="94"/>
</dbReference>
<dbReference type="DIP" id="DIP-4493N"/>
<dbReference type="FunCoup" id="P13587">
    <property type="interactions" value="82"/>
</dbReference>
<dbReference type="IntAct" id="P13587">
    <property type="interactions" value="4"/>
</dbReference>
<dbReference type="STRING" id="4932.YDR040C"/>
<dbReference type="TCDB" id="3.A.3.9.1">
    <property type="family name" value="the p-type atpase (p-atpase) superfamily"/>
</dbReference>
<dbReference type="iPTMnet" id="P13587"/>
<dbReference type="PaxDb" id="4932-YDR040C"/>
<dbReference type="PeptideAtlas" id="P13587"/>
<dbReference type="EnsemblFungi" id="YDR040C_mRNA">
    <property type="protein sequence ID" value="YDR040C"/>
    <property type="gene ID" value="YDR040C"/>
</dbReference>
<dbReference type="GeneID" id="851610"/>
<dbReference type="KEGG" id="sce:YDR040C"/>
<dbReference type="AGR" id="SGD:S000002447"/>
<dbReference type="SGD" id="S000002447">
    <property type="gene designation" value="ENA1"/>
</dbReference>
<dbReference type="VEuPathDB" id="FungiDB:YDR040C"/>
<dbReference type="eggNOG" id="KOG0202">
    <property type="taxonomic scope" value="Eukaryota"/>
</dbReference>
<dbReference type="GeneTree" id="ENSGT00940000176395"/>
<dbReference type="HOGENOM" id="CLU_002360_4_1_1"/>
<dbReference type="InParanoid" id="P13587"/>
<dbReference type="OMA" id="PVQKDCD"/>
<dbReference type="OrthoDB" id="3352408at2759"/>
<dbReference type="BioCyc" id="MetaCyc:G3O-29654-MONOMER"/>
<dbReference type="BioCyc" id="YEAST:G3O-29654-MONOMER"/>
<dbReference type="BRENDA" id="7.2.2.3">
    <property type="organism ID" value="1113"/>
</dbReference>
<dbReference type="BioGRID-ORCS" id="851610">
    <property type="hits" value="0 hits in 10 CRISPR screens"/>
</dbReference>
<dbReference type="PRO" id="PR:P13587"/>
<dbReference type="Proteomes" id="UP000002311">
    <property type="component" value="Chromosome IV"/>
</dbReference>
<dbReference type="RNAct" id="P13587">
    <property type="molecule type" value="protein"/>
</dbReference>
<dbReference type="GO" id="GO:0071944">
    <property type="term" value="C:cell periphery"/>
    <property type="evidence" value="ECO:0007005"/>
    <property type="project" value="SGD"/>
</dbReference>
<dbReference type="GO" id="GO:0000324">
    <property type="term" value="C:fungal-type vacuole"/>
    <property type="evidence" value="ECO:0007005"/>
    <property type="project" value="SGD"/>
</dbReference>
<dbReference type="GO" id="GO:0005886">
    <property type="term" value="C:plasma membrane"/>
    <property type="evidence" value="ECO:0000314"/>
    <property type="project" value="UniProtKB"/>
</dbReference>
<dbReference type="GO" id="GO:0005524">
    <property type="term" value="F:ATP binding"/>
    <property type="evidence" value="ECO:0007669"/>
    <property type="project" value="UniProtKB-KW"/>
</dbReference>
<dbReference type="GO" id="GO:0016887">
    <property type="term" value="F:ATP hydrolysis activity"/>
    <property type="evidence" value="ECO:0007669"/>
    <property type="project" value="InterPro"/>
</dbReference>
<dbReference type="GO" id="GO:0046872">
    <property type="term" value="F:metal ion binding"/>
    <property type="evidence" value="ECO:0007669"/>
    <property type="project" value="UniProtKB-KW"/>
</dbReference>
<dbReference type="GO" id="GO:0008556">
    <property type="term" value="F:P-type potassium transmembrane transporter activity"/>
    <property type="evidence" value="ECO:0000315"/>
    <property type="project" value="SGD"/>
</dbReference>
<dbReference type="GO" id="GO:0008554">
    <property type="term" value="F:P-type sodium transporter activity"/>
    <property type="evidence" value="ECO:0000314"/>
    <property type="project" value="SGD"/>
</dbReference>
<dbReference type="GO" id="GO:0042149">
    <property type="term" value="P:cellular response to glucose starvation"/>
    <property type="evidence" value="ECO:0000315"/>
    <property type="project" value="SGD"/>
</dbReference>
<dbReference type="GO" id="GO:0006972">
    <property type="term" value="P:hyperosmotic response"/>
    <property type="evidence" value="ECO:0000316"/>
    <property type="project" value="SGD"/>
</dbReference>
<dbReference type="GO" id="GO:0006874">
    <property type="term" value="P:intracellular calcium ion homeostasis"/>
    <property type="evidence" value="ECO:0000318"/>
    <property type="project" value="GO_Central"/>
</dbReference>
<dbReference type="GO" id="GO:0034220">
    <property type="term" value="P:monoatomic ion transmembrane transport"/>
    <property type="evidence" value="ECO:0000318"/>
    <property type="project" value="GO_Central"/>
</dbReference>
<dbReference type="GO" id="GO:0006813">
    <property type="term" value="P:potassium ion transport"/>
    <property type="evidence" value="ECO:0000315"/>
    <property type="project" value="SGD"/>
</dbReference>
<dbReference type="GO" id="GO:0009268">
    <property type="term" value="P:response to pH"/>
    <property type="evidence" value="ECO:0000316"/>
    <property type="project" value="SGD"/>
</dbReference>
<dbReference type="GO" id="GO:0009651">
    <property type="term" value="P:response to salt stress"/>
    <property type="evidence" value="ECO:0000314"/>
    <property type="project" value="UniProtKB"/>
</dbReference>
<dbReference type="GO" id="GO:0006814">
    <property type="term" value="P:sodium ion transport"/>
    <property type="evidence" value="ECO:0000316"/>
    <property type="project" value="SGD"/>
</dbReference>
<dbReference type="GO" id="GO:0055085">
    <property type="term" value="P:transmembrane transport"/>
    <property type="evidence" value="ECO:0000314"/>
    <property type="project" value="SGD"/>
</dbReference>
<dbReference type="CDD" id="cd02086">
    <property type="entry name" value="P-type_ATPase_Na_ENA"/>
    <property type="match status" value="1"/>
</dbReference>
<dbReference type="FunFam" id="2.70.150.10:FF:000016">
    <property type="entry name" value="Calcium-transporting P-type ATPase putative"/>
    <property type="match status" value="1"/>
</dbReference>
<dbReference type="FunFam" id="1.20.1110.10:FF:000040">
    <property type="entry name" value="Na(+)-exporting P-type ATPase"/>
    <property type="match status" value="1"/>
</dbReference>
<dbReference type="FunFam" id="1.20.1110.10:FF:000015">
    <property type="entry name" value="Sodium ion P-type ATPase"/>
    <property type="match status" value="1"/>
</dbReference>
<dbReference type="FunFam" id="3.40.1110.10:FF:000039">
    <property type="entry name" value="Sodium P-type ATPase"/>
    <property type="match status" value="1"/>
</dbReference>
<dbReference type="FunFam" id="3.40.50.1000:FF:000047">
    <property type="entry name" value="Sodium P-type ATPase"/>
    <property type="match status" value="1"/>
</dbReference>
<dbReference type="Gene3D" id="3.40.1110.10">
    <property type="entry name" value="Calcium-transporting ATPase, cytoplasmic domain N"/>
    <property type="match status" value="1"/>
</dbReference>
<dbReference type="Gene3D" id="2.70.150.10">
    <property type="entry name" value="Calcium-transporting ATPase, cytoplasmic transduction domain A"/>
    <property type="match status" value="1"/>
</dbReference>
<dbReference type="Gene3D" id="1.20.1110.10">
    <property type="entry name" value="Calcium-transporting ATPase, transmembrane domain"/>
    <property type="match status" value="2"/>
</dbReference>
<dbReference type="Gene3D" id="3.40.50.1000">
    <property type="entry name" value="HAD superfamily/HAD-like"/>
    <property type="match status" value="1"/>
</dbReference>
<dbReference type="InterPro" id="IPR006068">
    <property type="entry name" value="ATPase_P-typ_cation-transptr_C"/>
</dbReference>
<dbReference type="InterPro" id="IPR004014">
    <property type="entry name" value="ATPase_P-typ_cation-transptr_N"/>
</dbReference>
<dbReference type="InterPro" id="IPR023299">
    <property type="entry name" value="ATPase_P-typ_cyto_dom_N"/>
</dbReference>
<dbReference type="InterPro" id="IPR018303">
    <property type="entry name" value="ATPase_P-typ_P_site"/>
</dbReference>
<dbReference type="InterPro" id="IPR023298">
    <property type="entry name" value="ATPase_P-typ_TM_dom_sf"/>
</dbReference>
<dbReference type="InterPro" id="IPR008250">
    <property type="entry name" value="ATPase_P-typ_transduc_dom_A_sf"/>
</dbReference>
<dbReference type="InterPro" id="IPR036412">
    <property type="entry name" value="HAD-like_sf"/>
</dbReference>
<dbReference type="InterPro" id="IPR023214">
    <property type="entry name" value="HAD_sf"/>
</dbReference>
<dbReference type="InterPro" id="IPR006414">
    <property type="entry name" value="P-type_ATPase_IID"/>
</dbReference>
<dbReference type="InterPro" id="IPR001757">
    <property type="entry name" value="P_typ_ATPase"/>
</dbReference>
<dbReference type="InterPro" id="IPR044492">
    <property type="entry name" value="P_typ_ATPase_HD_dom"/>
</dbReference>
<dbReference type="NCBIfam" id="TIGR01523">
    <property type="entry name" value="ATPase-IID_K-Na"/>
    <property type="match status" value="1"/>
</dbReference>
<dbReference type="NCBIfam" id="TIGR01494">
    <property type="entry name" value="ATPase_P-type"/>
    <property type="match status" value="3"/>
</dbReference>
<dbReference type="PANTHER" id="PTHR42861">
    <property type="entry name" value="CALCIUM-TRANSPORTING ATPASE"/>
    <property type="match status" value="1"/>
</dbReference>
<dbReference type="Pfam" id="PF13246">
    <property type="entry name" value="Cation_ATPase"/>
    <property type="match status" value="1"/>
</dbReference>
<dbReference type="Pfam" id="PF00689">
    <property type="entry name" value="Cation_ATPase_C"/>
    <property type="match status" value="1"/>
</dbReference>
<dbReference type="Pfam" id="PF00690">
    <property type="entry name" value="Cation_ATPase_N"/>
    <property type="match status" value="1"/>
</dbReference>
<dbReference type="Pfam" id="PF00122">
    <property type="entry name" value="E1-E2_ATPase"/>
    <property type="match status" value="1"/>
</dbReference>
<dbReference type="Pfam" id="PF00702">
    <property type="entry name" value="Hydrolase"/>
    <property type="match status" value="1"/>
</dbReference>
<dbReference type="PRINTS" id="PR00119">
    <property type="entry name" value="CATATPASE"/>
</dbReference>
<dbReference type="SFLD" id="SFLDS00003">
    <property type="entry name" value="Haloacid_Dehalogenase"/>
    <property type="match status" value="1"/>
</dbReference>
<dbReference type="SFLD" id="SFLDF00027">
    <property type="entry name" value="p-type_atpase"/>
    <property type="match status" value="1"/>
</dbReference>
<dbReference type="SMART" id="SM00831">
    <property type="entry name" value="Cation_ATPase_N"/>
    <property type="match status" value="1"/>
</dbReference>
<dbReference type="SUPFAM" id="SSF81653">
    <property type="entry name" value="Calcium ATPase, transduction domain A"/>
    <property type="match status" value="1"/>
</dbReference>
<dbReference type="SUPFAM" id="SSF81665">
    <property type="entry name" value="Calcium ATPase, transmembrane domain M"/>
    <property type="match status" value="1"/>
</dbReference>
<dbReference type="SUPFAM" id="SSF56784">
    <property type="entry name" value="HAD-like"/>
    <property type="match status" value="1"/>
</dbReference>
<dbReference type="SUPFAM" id="SSF81660">
    <property type="entry name" value="Metal cation-transporting ATPase, ATP-binding domain N"/>
    <property type="match status" value="1"/>
</dbReference>
<dbReference type="PROSITE" id="PS00154">
    <property type="entry name" value="ATPASE_E1_E2"/>
    <property type="match status" value="1"/>
</dbReference>
<organism>
    <name type="scientific">Saccharomyces cerevisiae (strain ATCC 204508 / S288c)</name>
    <name type="common">Baker's yeast</name>
    <dbReference type="NCBI Taxonomy" id="559292"/>
    <lineage>
        <taxon>Eukaryota</taxon>
        <taxon>Fungi</taxon>
        <taxon>Dikarya</taxon>
        <taxon>Ascomycota</taxon>
        <taxon>Saccharomycotina</taxon>
        <taxon>Saccharomycetes</taxon>
        <taxon>Saccharomycetales</taxon>
        <taxon>Saccharomycetaceae</taxon>
        <taxon>Saccharomyces</taxon>
    </lineage>
</organism>
<sequence>MGEGTTKENNNAEFNAYHTLTAEEAAEFIGTSLTEGLTQDEFVHRLKTVGENTLGDDTKIDYKAMVLHQVCNAMIMVLLISMIISFAMHDWITGGVISFVIAVNVLIGLVQEYKATKTMNSLKNLSSPNAHVIRNGKSETINSKDVVPGDICLVKVGDTIPADLRLIETKNFDTDESLLTGESLPVSKDANLVFGKEEETSVGDRLNLAFSSSAVVKGRAKGIVIKTALNSEIGKIAKSLQGDSGLISRDPSKSWLQNTWISTKKVTGAFLGTNVGTPLHRKLSKLAVLLFWIAVLFAIIVMASQKFDVDKRVAIYAICVALSMIPSSLVVVLTITMSVGAAVMVSRNVIVRKLDSLEALGAVNDICSDKTGTLTQGKMLARQIWIPRFGTITISNSDDPFNPNEGNVSLIPRFSPYEYSHNEDGDVGILQNFKDRLYEKDLPEDIDMDLFQKWLETATLANIATVFKDDATDCWKAHGDPTEIAIQVFATKMDLPHNALTGEKSTNQSNENDQSSLSQHNEKPGSAQFEHIAEFPFDSTVKRMSSVYYNNHNETYNIYGKGAFESIISCCSSWYGKDGVKITPLTDCDVETIRKNVYSLSNEGLRVLGFASKSFTKDQVNDDQLKNITSNRATAESDLVFLGLIGIYDPPRNETAGAVKKFHQAGINVHMLTGDFVGTAKAIAQEVGILPTNLYHYSQEIVDSMVMTGSQFDGLSEEEVDDLPVLPLVIARCSPQTKVRMIEALHRRKKFCTMTGDGVNDSPSLKMANVGIAMGINGSDVSKEASDIVLSDDNFASILNAVEEGRRMTDNIQKFVLQLLAENVAQALYLIIGLVFRDENGKSVFPLSPVEVLWIIVVTSCFPAMGLGLEKAAPDLMDRPPHDSEVGIFTWEVIIDTFAYGIIMTGSCMASFTGSLYGINSGRLGHDCDGTYNSSCRDVYRSRSAAFATMTWCALILAWEVVDMRRSFFRMHPDTDSPVKEFFRSIWGNQFLFWSIIFGFVSAFPVVYIPVINDKVFLHKPIGAEWGLAIAFTIAFWIGAELYKCGKRRYFKTQRAHNPENDLESNNKRDPFEAYSTSTTIHTEVNIGIKQ</sequence>
<name>ATN1_YEAST</name>
<feature type="chain" id="PRO_0000046242" description="Sodium/potassium exporting P-type ATPase 1">
    <location>
        <begin position="1"/>
        <end position="1091"/>
    </location>
</feature>
<feature type="topological domain" description="Cytoplasmic" evidence="2">
    <location>
        <begin position="1"/>
        <end position="63"/>
    </location>
</feature>
<feature type="transmembrane region" description="Helical" evidence="2">
    <location>
        <begin position="64"/>
        <end position="84"/>
    </location>
</feature>
<feature type="topological domain" description="Extracellular" evidence="2">
    <location>
        <begin position="85"/>
        <end position="90"/>
    </location>
</feature>
<feature type="transmembrane region" description="Helical" evidence="2">
    <location>
        <begin position="91"/>
        <end position="111"/>
    </location>
</feature>
<feature type="topological domain" description="Cytoplasmic" evidence="2">
    <location>
        <begin position="112"/>
        <end position="282"/>
    </location>
</feature>
<feature type="transmembrane region" description="Helical" evidence="2">
    <location>
        <begin position="283"/>
        <end position="303"/>
    </location>
</feature>
<feature type="topological domain" description="Extracellular" evidence="2">
    <location>
        <begin position="304"/>
        <end position="312"/>
    </location>
</feature>
<feature type="transmembrane region" description="Helical" evidence="2">
    <location>
        <begin position="313"/>
        <end position="333"/>
    </location>
</feature>
<feature type="topological domain" description="Cytoplasmic" evidence="2">
    <location>
        <begin position="334"/>
        <end position="815"/>
    </location>
</feature>
<feature type="transmembrane region" description="Helical" evidence="2">
    <location>
        <begin position="816"/>
        <end position="836"/>
    </location>
</feature>
<feature type="topological domain" description="Extracellular" evidence="2">
    <location>
        <begin position="837"/>
        <end position="848"/>
    </location>
</feature>
<feature type="transmembrane region" description="Helical" evidence="2">
    <location>
        <begin position="849"/>
        <end position="869"/>
    </location>
</feature>
<feature type="topological domain" description="Cytoplasmic" evidence="2">
    <location>
        <begin position="870"/>
        <end position="885"/>
    </location>
</feature>
<feature type="transmembrane region" description="Helical" evidence="2">
    <location>
        <begin position="886"/>
        <end position="906"/>
    </location>
</feature>
<feature type="topological domain" description="Extracellular" evidence="2">
    <location>
        <begin position="907"/>
        <end position="943"/>
    </location>
</feature>
<feature type="transmembrane region" description="Helical" evidence="2">
    <location>
        <begin position="944"/>
        <end position="964"/>
    </location>
</feature>
<feature type="topological domain" description="Cytoplasmic" evidence="2">
    <location>
        <begin position="965"/>
        <end position="991"/>
    </location>
</feature>
<feature type="transmembrane region" description="Helical" evidence="2">
    <location>
        <begin position="992"/>
        <end position="1012"/>
    </location>
</feature>
<feature type="topological domain" description="Extracellular" evidence="2">
    <location>
        <begin position="1013"/>
        <end position="1021"/>
    </location>
</feature>
<feature type="transmembrane region" description="Helical" evidence="2">
    <location>
        <begin position="1022"/>
        <end position="1042"/>
    </location>
</feature>
<feature type="topological domain" description="Cytoplasmic" evidence="2">
    <location>
        <begin position="1043"/>
        <end position="1091"/>
    </location>
</feature>
<feature type="region of interest" description="Disordered" evidence="3">
    <location>
        <begin position="499"/>
        <end position="525"/>
    </location>
</feature>
<feature type="compositionally biased region" description="Polar residues" evidence="3">
    <location>
        <begin position="503"/>
        <end position="519"/>
    </location>
</feature>
<feature type="active site" description="4-aspartylphosphate intermediate" evidence="1">
    <location>
        <position position="369"/>
    </location>
</feature>
<feature type="binding site" evidence="1">
    <location>
        <position position="369"/>
    </location>
    <ligand>
        <name>Mg(2+)</name>
        <dbReference type="ChEBI" id="CHEBI:18420"/>
    </ligand>
</feature>
<feature type="binding site" evidence="1">
    <location>
        <position position="371"/>
    </location>
    <ligand>
        <name>ATP</name>
        <dbReference type="ChEBI" id="CHEBI:30616"/>
    </ligand>
</feature>
<feature type="binding site" evidence="1">
    <location>
        <position position="371"/>
    </location>
    <ligand>
        <name>Mg(2+)</name>
        <dbReference type="ChEBI" id="CHEBI:18420"/>
    </ligand>
</feature>
<feature type="binding site" evidence="1">
    <location>
        <position position="483"/>
    </location>
    <ligand>
        <name>ATP</name>
        <dbReference type="ChEBI" id="CHEBI:30616"/>
    </ligand>
</feature>
<feature type="binding site" evidence="1">
    <location>
        <position position="561"/>
    </location>
    <ligand>
        <name>ATP</name>
        <dbReference type="ChEBI" id="CHEBI:30616"/>
    </ligand>
</feature>
<feature type="binding site" evidence="1">
    <location>
        <position position="606"/>
    </location>
    <ligand>
        <name>ATP</name>
        <dbReference type="ChEBI" id="CHEBI:30616"/>
    </ligand>
</feature>
<feature type="binding site" evidence="1">
    <location>
        <position position="673"/>
    </location>
    <ligand>
        <name>ATP</name>
        <dbReference type="ChEBI" id="CHEBI:30616"/>
    </ligand>
</feature>
<feature type="binding site" evidence="1">
    <location>
        <position position="674"/>
    </location>
    <ligand>
        <name>ATP</name>
        <dbReference type="ChEBI" id="CHEBI:30616"/>
    </ligand>
</feature>
<feature type="binding site" evidence="1">
    <location>
        <position position="675"/>
    </location>
    <ligand>
        <name>ATP</name>
        <dbReference type="ChEBI" id="CHEBI:30616"/>
    </ligand>
</feature>
<feature type="binding site" evidence="1">
    <location>
        <position position="732"/>
    </location>
    <ligand>
        <name>ATP</name>
        <dbReference type="ChEBI" id="CHEBI:30616"/>
    </ligand>
</feature>
<feature type="binding site" evidence="1">
    <location>
        <position position="738"/>
    </location>
    <ligand>
        <name>ATP</name>
        <dbReference type="ChEBI" id="CHEBI:30616"/>
    </ligand>
</feature>
<feature type="binding site" evidence="1">
    <location>
        <position position="757"/>
    </location>
    <ligand>
        <name>Mg(2+)</name>
        <dbReference type="ChEBI" id="CHEBI:18420"/>
    </ligand>
</feature>
<feature type="binding site" evidence="1">
    <location>
        <position position="760"/>
    </location>
    <ligand>
        <name>ATP</name>
        <dbReference type="ChEBI" id="CHEBI:30616"/>
    </ligand>
</feature>
<keyword id="KW-0067">ATP-binding</keyword>
<keyword id="KW-1003">Cell membrane</keyword>
<keyword id="KW-0406">Ion transport</keyword>
<keyword id="KW-0460">Magnesium</keyword>
<keyword id="KW-0472">Membrane</keyword>
<keyword id="KW-0479">Metal-binding</keyword>
<keyword id="KW-0547">Nucleotide-binding</keyword>
<keyword id="KW-0630">Potassium</keyword>
<keyword id="KW-0633">Potassium transport</keyword>
<keyword id="KW-1185">Reference proteome</keyword>
<keyword id="KW-0915">Sodium</keyword>
<keyword id="KW-0739">Sodium transport</keyword>
<keyword id="KW-1278">Translocase</keyword>
<keyword id="KW-0812">Transmembrane</keyword>
<keyword id="KW-1133">Transmembrane helix</keyword>
<keyword id="KW-0813">Transport</keyword>
<proteinExistence type="evidence at protein level"/>
<comment type="function">
    <text evidence="6 7 8 9 11">Catalyzes the hydrolysis of ATP coupled with the export of sodium and potassium from the cell (PubMed:14617094, PubMed:22329368, PubMed:7664728, PubMed:9315618). May export potassium less efficiently (PubMed:14617094). May transport other cations such as lithium (PubMed:7664728, PubMed:9315618). Sodium/potassium efflux ATPases are involved in salt tolerance and maintaining the membrane potential across the plasma membrane in high salinity (Na+) or alkaline (K+) environments (PubMed:22329368, PubMed:7664728, PubMed:9315618). Is negatively modulated by SIS2/HAL3 (PubMed:19915539).</text>
</comment>
<comment type="catalytic activity">
    <reaction evidence="15">
        <text>Na(+)(in) + ATP + H2O = Na(+)(out) + ADP + phosphate + H(+)</text>
        <dbReference type="Rhea" id="RHEA:14633"/>
        <dbReference type="ChEBI" id="CHEBI:15377"/>
        <dbReference type="ChEBI" id="CHEBI:15378"/>
        <dbReference type="ChEBI" id="CHEBI:29101"/>
        <dbReference type="ChEBI" id="CHEBI:30616"/>
        <dbReference type="ChEBI" id="CHEBI:43474"/>
        <dbReference type="ChEBI" id="CHEBI:456216"/>
        <dbReference type="EC" id="7.2.2.3"/>
    </reaction>
    <physiologicalReaction direction="left-to-right" evidence="15">
        <dbReference type="Rhea" id="RHEA:14634"/>
    </physiologicalReaction>
</comment>
<comment type="catalytic activity">
    <reaction evidence="14">
        <text>K(+)(in) + ATP + H2O = K(+)(out) + ADP + phosphate + H(+)</text>
        <dbReference type="Rhea" id="RHEA:75815"/>
        <dbReference type="ChEBI" id="CHEBI:15377"/>
        <dbReference type="ChEBI" id="CHEBI:15378"/>
        <dbReference type="ChEBI" id="CHEBI:29103"/>
        <dbReference type="ChEBI" id="CHEBI:30616"/>
        <dbReference type="ChEBI" id="CHEBI:43474"/>
        <dbReference type="ChEBI" id="CHEBI:456216"/>
    </reaction>
</comment>
<comment type="cofactor">
    <cofactor evidence="1">
        <name>Mg(2+)</name>
        <dbReference type="ChEBI" id="CHEBI:18420"/>
    </cofactor>
</comment>
<comment type="subcellular location">
    <subcellularLocation>
        <location evidence="4 9 11">Cell membrane</location>
        <topology evidence="4 9 11">Multi-pass membrane protein</topology>
    </subcellularLocation>
</comment>
<comment type="induction">
    <text evidence="9 10">By sodium ions. Induction at low salt concentrations (0.3 M) is mediated by the high-osmolarity glycerol (HOG)-MAP kinase pathway, a system activated by non-specific osmotic stress, and by the protein kinase A pathway. At high salt concentrations (0.8 M) is mediated by the protein phosphatase calcineurin, which is specifically activated by sodium ions.</text>
</comment>
<comment type="PTM">
    <text evidence="11">The active site is phosphorylated in presence of sodium or potassium and in conditions of higher pH (PubMed:9315618). Not phosphorylated in presence of calcium ions (PubMed:9315618).</text>
</comment>
<comment type="miscellaneous">
    <text evidence="5">Present with 688 molecules/cell in log phase SD medium.</text>
</comment>
<comment type="similarity">
    <text evidence="13">Belongs to the cation transport ATPase (P-type) (TC 3.A.3) family. Type IID subfamily.</text>
</comment>
<protein>
    <recommendedName>
        <fullName evidence="13">Sodium/potassium exporting P-type ATPase 1</fullName>
        <ecNumber evidence="15">7.2.2.3</ecNumber>
    </recommendedName>
</protein>
<accession>P13587</accession>
<accession>D6VS28</accession>